<comment type="function">
    <text evidence="1 3 4 5 10 12 14 15 16 17 18 19 20 21 22">A key translational regulator that binds mRNA to regulate translation initiation and/or mRNA stability, initially identified for its effects on central carbon metabolism (PubMed:8393005). Mediates global changes in gene expression, shifting from rapid growth to stress survival by linking envelope stress, the stringent response and the catabolite repression systems (PubMed:21488981, PubMed:28924029). Binds to the 5'-UTR of mRNA to repress or activate translation; 2 binding sites on the homodimer can bridge 2 sites within target RNA (By similarity). Exerts reciprocal effects on enzymes of gluconeogenesis and glycogen biosynthesis versus those of glycolysis (PubMed:16923806, PubMed:7493933). Negatively effects glycogen biosynthesis, gluconeogenesis, alters cell size and surface properties (PubMed:7493933, PubMed:7751274, PubMed:8393005). Activates regulates expression of glycolysis genes (PubMed:7493933). Represses biofilm formation (PubMed:11741870). Regulates glycogen synthesis under both aerobic and anaerobic conditions; overexpression strongly inhibits glycogen accumulation (PubMed:8393005). Binds to 4 sites in its own promoter, including the Shine-Dalgarno sequence, repressing its own translation; mutating the binding-sites decreases repression (PubMed:21696456). Indirectly activates transcription from 1 of its 5 promoters, which is responsible for increased expression during stationary phase (PubMed:21696456). Binds to at least 720 transcripts in strain K12 / CF7789, many of which are also part of the stringent response, including relA, spoT and dksA; slightly represses RelA and slightly activates DskA translation (PubMed:21488981). Binds to and represses the ECF sigma factor rpoE promoter (PubMed:28924029). Accelerates the degradation of glgC gene transcripts; overexpression further decreases glgC transcripts (PubMed:7751274). Binds 2 sites in the glgC mRNA leader, 1 of which overlaps the Shine-Dalgarno sequence, preventing ribosome-binding and thus destabilizing the mRNA (PubMed:12067347). Acts to inhibit interaction between the CcdB (also known as LetD) protein and the A subunit of DNA gyrase (PubMed:8604133). Required to activate motility and flagellum biosynthesis through the post-transcriptional activation of flhDC expression by binding to and stabilizing the flhDC message (PubMed:11298291). Represses translation of iraD mRNA via translational coupling to an upstream open reading frame (PubMed:28851853). Binds to mRNA and reduces levels of probable diguanylate cyclases dgcT and dgcZ (PubMed:18713317).</text>
</comment>
<comment type="function">
    <text evidence="6 7 23">Binds to and is sequestered by non-coding small RNAs (sRNA) CsrB and CsrC which antagonize the activity of CsrA (PubMed:12694612, PubMed:9211896). The consensus RNA-binding site is CAGGA(U/A/C)G which is located in probable hairpin loops (PubMed:9211896). There are 18 sites in CsrB, which cooperatively binds about 18 copies of CsrA (PubMed:12694612, PubMed:9211896). CsrC has 9 sites, and cooperatively binds multiple copies of CsrA (PubMed:12694612). Indirectly activates expression of CsrB and CsrC, both dependently and independently of the BarA-UvrY two-component system (PubMed:12193630, PubMed:12694612). ppGpp activates transcription of CsrA-antagonistic small RNAs CsrB and CsrC, which down-regulates CsrA's action on translation during the stringent response (PubMed:21488981).</text>
</comment>
<comment type="subunit">
    <text evidence="8">Homodimer; the beta-strands of each monomer intercalate to form a hydrophobic core while the alpha-helices form wings that extend away from the core (PubMed:15866937).</text>
</comment>
<comment type="subcellular location">
    <subcellularLocation>
        <location evidence="2">Cytoplasm</location>
    </subcellularLocation>
</comment>
<comment type="induction">
    <text evidence="9 12 15 16">Activated by MqsR (PubMed:16352847, PubMed:18713317). Activated by DksA and (p)ppGpp, under partial control of RpoS, the sigma stress factor (at protein level) (PubMed:21488981). Binds to 4 sites in its own mRNA and represses translation (PubMed:21696456). Expressed from 5 promoters; P2 and P5 depend on housekeeping sigma factor 70 (rpoD) while P1 and P3 2 depend on RpoS; indirect activation of P3 leads to increased transcription during the log to stationary phase shift (PubMed:21696456).</text>
</comment>
<comment type="domain">
    <text evidence="10">Two regions important for regulation and RNA-binding are found in the N-terminus (residues 2-7) and middle (residues 40-47). Both are part of the intercalated beta-strands that form the hydrophobic core of the protein; region 1 from one monomer contacts region 2 of the other. The homodimer has 2 distinct RNA-binding regions on opposite, solvent-exposed surface of the protein.</text>
</comment>
<comment type="disruption phenotype">
    <text evidence="4 7 13 14 15 18 19 20 21">Essential, it cannot be deleted when cells grow on LB but cells will grow with pyruvate as the sole carbon source; if glycogen synthesis is impaired then cells become viable (PubMed:19103924). Most deletion experiments use an allele which has a kanamycin-resistance cassette inserted after amino acid 50, which retains about 10% residual activity (PubMed:19103924, PubMed:8393005). Increased levels of glgC transcripts during both exponential and stationary phases (PubMed:7751274). Decreased levels of enzymes involved in glycolysis (PubMed:7493933). Increased biofilm formation (PubMed:11741870). Decreased expression of it antagonistic small RNAs CsrB and CsrC (PubMed:12694612). Allows basal levels of poly-GlcNAc synthesis and biofilm formation; this disrupted strain serves as a model system for biofilm formation (PubMed:19460094). Increased expression of RelA, about 1.5-fold increase in (p)ppGpp levels (PubMed:21488981). Increased levels of ECF sigma factor E (rpoE) (PubMed:28924029).</text>
</comment>
<comment type="miscellaneous">
    <text evidence="11">Identified as a multicopy suppressor of the slow growth phenotype of an rsgA (yjeQ) deletion mutant.</text>
</comment>
<comment type="similarity">
    <text evidence="2">Belongs to the CsrA/RsmA family.</text>
</comment>
<feature type="chain" id="PRO_0000177061" description="Carbon storage regulator">
    <location>
        <begin position="1"/>
        <end position="61"/>
    </location>
</feature>
<feature type="region of interest" description="Region 1, important for regulation and mRNA-binding" evidence="10">
    <location>
        <begin position="2"/>
        <end position="7"/>
    </location>
</feature>
<feature type="region of interest" description="Region 2, important for regulation and mRNA-binding" evidence="10">
    <location>
        <begin position="40"/>
        <end position="47"/>
    </location>
</feature>
<feature type="mutagenesis site" description="Loss of in vivo repression and activation, 73-fold decreased affinity for RNA, about 75% wild-type protein levels." evidence="10">
    <original>L</original>
    <variation>A</variation>
    <location>
        <position position="2"/>
    </location>
</feature>
<feature type="mutagenesis site" description="80% loss of in vivo repression and activation, about 20% wild-type protein levels." evidence="10">
    <original>I</original>
    <variation>A</variation>
    <location>
        <position position="3"/>
    </location>
</feature>
<feature type="mutagenesis site" description="90% loss of in vivo repression and activation, 60-fold decreased affinity for RNA, about 60% wild-type protein levels." evidence="10">
    <original>L</original>
    <variation>A</variation>
    <location>
        <position position="4"/>
    </location>
</feature>
<feature type="mutagenesis site" description="Nearly complete loss of in vivo repression and activation, 30-fold decreased affinity for RNA, about 175% wild-type protein levels." evidence="10">
    <original>R</original>
    <variation>A</variation>
    <location>
        <position position="6"/>
    </location>
</feature>
<feature type="mutagenesis site" description="70% loss of in vivo repression and activation, 12-fold decreased affinity for RNA, about 125% wild-type protein levels." evidence="10">
    <original>R</original>
    <variation>A</variation>
    <location>
        <position position="7"/>
    </location>
</feature>
<feature type="mutagenesis site" description="Increased repression and activation in vivo, about 75% wild-type protein levels." evidence="10">
    <original>T</original>
    <variation>A</variation>
    <location>
        <position position="19"/>
    </location>
</feature>
<feature type="mutagenesis site" description="Increased repression and activation in vivo, about 75% wild-type protein levels." evidence="10">
    <original>N</original>
    <variation>A</variation>
    <location>
        <position position="35"/>
    </location>
</feature>
<feature type="mutagenesis site" description="90% loss of in vivo repression and activation, 67-fold decreased affinity for RNA, about 75% wild-type protein levels." evidence="10">
    <original>V</original>
    <variation>A</variation>
    <location>
        <position position="40"/>
    </location>
</feature>
<feature type="mutagenesis site" description="Loss of in vivo repression and activation, 135-fold decreased affinity for RNA, about 40% wild-type protein levels." evidence="10">
    <original>V</original>
    <variation>A</variation>
    <location>
        <position position="42"/>
    </location>
</feature>
<feature type="mutagenesis site" description="Loss of in vivo repression and activation, 150-fold decreased affinity for RNA, &gt;500% wild-type protein levels." evidence="10">
    <original>R</original>
    <variation>A</variation>
    <location>
        <position position="44"/>
    </location>
</feature>
<feature type="mutagenesis site" description="90% loss of in vivo repression and activation, 67-fold decreased affinity for RNA, about 150% wild-type protein levels." evidence="10">
    <original>I</original>
    <variation>A</variation>
    <location>
        <position position="47"/>
    </location>
</feature>
<feature type="strand" evidence="27">
    <location>
        <begin position="2"/>
        <end position="7"/>
    </location>
</feature>
<feature type="strand" evidence="27">
    <location>
        <begin position="11"/>
        <end position="14"/>
    </location>
</feature>
<feature type="turn" evidence="27">
    <location>
        <begin position="15"/>
        <end position="17"/>
    </location>
</feature>
<feature type="strand" evidence="27">
    <location>
        <begin position="18"/>
        <end position="26"/>
    </location>
</feature>
<feature type="strand" evidence="27">
    <location>
        <begin position="29"/>
        <end position="35"/>
    </location>
</feature>
<feature type="strand" evidence="27">
    <location>
        <begin position="42"/>
        <end position="44"/>
    </location>
</feature>
<feature type="helix" evidence="27">
    <location>
        <begin position="45"/>
        <end position="53"/>
    </location>
</feature>
<name>CSRA_ECOLI</name>
<keyword id="KW-0002">3D-structure</keyword>
<keyword id="KW-0010">Activator</keyword>
<keyword id="KW-0963">Cytoplasm</keyword>
<keyword id="KW-1185">Reference proteome</keyword>
<keyword id="KW-0678">Repressor</keyword>
<keyword id="KW-0694">RNA-binding</keyword>
<keyword id="KW-0810">Translation regulation</keyword>
<sequence>MLILTRRVGETLMIGDEVTVTVLGVKGNQVRIGVNAPKEVSVHREEIYQRIQAEKSQQSSY</sequence>
<organism>
    <name type="scientific">Escherichia coli (strain K12)</name>
    <dbReference type="NCBI Taxonomy" id="83333"/>
    <lineage>
        <taxon>Bacteria</taxon>
        <taxon>Pseudomonadati</taxon>
        <taxon>Pseudomonadota</taxon>
        <taxon>Gammaproteobacteria</taxon>
        <taxon>Enterobacterales</taxon>
        <taxon>Enterobacteriaceae</taxon>
        <taxon>Escherichia</taxon>
    </lineage>
</organism>
<protein>
    <recommendedName>
        <fullName evidence="26">Carbon storage regulator</fullName>
    </recommendedName>
    <alternativeName>
        <fullName evidence="2">Translational dual regulator CsrA</fullName>
    </alternativeName>
</protein>
<accession>P69913</accession>
<accession>P31803</accession>
<gene>
    <name evidence="2 24" type="primary">csrA</name>
    <name evidence="25" type="synonym">zfiA</name>
    <name type="ordered locus">b2696</name>
    <name type="ordered locus">JW2666</name>
</gene>
<evidence type="ECO:0000250" key="1">
    <source>
        <dbReference type="UniProtKB" id="P0DPC3"/>
    </source>
</evidence>
<evidence type="ECO:0000255" key="2">
    <source>
        <dbReference type="HAMAP-Rule" id="MF_00167"/>
    </source>
</evidence>
<evidence type="ECO:0000269" key="3">
    <source>
    </source>
</evidence>
<evidence type="ECO:0000269" key="4">
    <source>
    </source>
</evidence>
<evidence type="ECO:0000269" key="5">
    <source>
    </source>
</evidence>
<evidence type="ECO:0000269" key="6">
    <source>
    </source>
</evidence>
<evidence type="ECO:0000269" key="7">
    <source>
    </source>
</evidence>
<evidence type="ECO:0000269" key="8">
    <source>
    </source>
</evidence>
<evidence type="ECO:0000269" key="9">
    <source>
    </source>
</evidence>
<evidence type="ECO:0000269" key="10">
    <source>
    </source>
</evidence>
<evidence type="ECO:0000269" key="11">
    <source>
    </source>
</evidence>
<evidence type="ECO:0000269" key="12">
    <source>
    </source>
</evidence>
<evidence type="ECO:0000269" key="13">
    <source>
    </source>
</evidence>
<evidence type="ECO:0000269" key="14">
    <source>
    </source>
</evidence>
<evidence type="ECO:0000269" key="15">
    <source>
    </source>
</evidence>
<evidence type="ECO:0000269" key="16">
    <source>
    </source>
</evidence>
<evidence type="ECO:0000269" key="17">
    <source>
    </source>
</evidence>
<evidence type="ECO:0000269" key="18">
    <source>
    </source>
</evidence>
<evidence type="ECO:0000269" key="19">
    <source>
    </source>
</evidence>
<evidence type="ECO:0000269" key="20">
    <source>
    </source>
</evidence>
<evidence type="ECO:0000269" key="21">
    <source>
    </source>
</evidence>
<evidence type="ECO:0000269" key="22">
    <source>
    </source>
</evidence>
<evidence type="ECO:0000269" key="23">
    <source>
    </source>
</evidence>
<evidence type="ECO:0000303" key="24">
    <source>
    </source>
</evidence>
<evidence type="ECO:0000303" key="25">
    <source>
    </source>
</evidence>
<evidence type="ECO:0000305" key="26"/>
<evidence type="ECO:0007829" key="27">
    <source>
        <dbReference type="PDB" id="5Z38"/>
    </source>
</evidence>
<dbReference type="EMBL" id="L07596">
    <property type="protein sequence ID" value="AAA71919.1"/>
    <property type="molecule type" value="Unassigned_DNA"/>
</dbReference>
<dbReference type="EMBL" id="D44453">
    <property type="protein sequence ID" value="BAA21555.1"/>
    <property type="molecule type" value="Genomic_DNA"/>
</dbReference>
<dbReference type="EMBL" id="U00096">
    <property type="protein sequence ID" value="AAC75738.1"/>
    <property type="molecule type" value="Genomic_DNA"/>
</dbReference>
<dbReference type="EMBL" id="AP009048">
    <property type="protein sequence ID" value="BAA16558.1"/>
    <property type="molecule type" value="Genomic_DNA"/>
</dbReference>
<dbReference type="PIR" id="B40608">
    <property type="entry name" value="B40608"/>
</dbReference>
<dbReference type="RefSeq" id="NP_417176.1">
    <property type="nucleotide sequence ID" value="NC_000913.3"/>
</dbReference>
<dbReference type="RefSeq" id="WP_000906486.1">
    <property type="nucleotide sequence ID" value="NZ_STEB01000027.1"/>
</dbReference>
<dbReference type="PDB" id="1Y00">
    <property type="method" value="NMR"/>
    <property type="chains" value="A/B=1-61"/>
</dbReference>
<dbReference type="PDB" id="5Z38">
    <property type="method" value="X-ray"/>
    <property type="resolution" value="2.29 A"/>
    <property type="chains" value="E/G/I/K=1-44, F/H/J/L=1-61"/>
</dbReference>
<dbReference type="PDBsum" id="1Y00"/>
<dbReference type="PDBsum" id="5Z38"/>
<dbReference type="SMR" id="P69913"/>
<dbReference type="BioGRID" id="4259421">
    <property type="interactions" value="232"/>
</dbReference>
<dbReference type="BioGRID" id="851508">
    <property type="interactions" value="4"/>
</dbReference>
<dbReference type="DIP" id="DIP-47836N"/>
<dbReference type="FunCoup" id="P69913">
    <property type="interactions" value="385"/>
</dbReference>
<dbReference type="IntAct" id="P69913">
    <property type="interactions" value="10"/>
</dbReference>
<dbReference type="STRING" id="511145.b2696"/>
<dbReference type="BindingDB" id="P69913"/>
<dbReference type="ChEMBL" id="CHEMBL5169227"/>
<dbReference type="jPOST" id="P69913"/>
<dbReference type="PaxDb" id="511145-b2696"/>
<dbReference type="EnsemblBacteria" id="AAC75738">
    <property type="protein sequence ID" value="AAC75738"/>
    <property type="gene ID" value="b2696"/>
</dbReference>
<dbReference type="GeneID" id="947176"/>
<dbReference type="GeneID" id="98389839"/>
<dbReference type="KEGG" id="ecj:JW2666"/>
<dbReference type="KEGG" id="eco:b2696"/>
<dbReference type="KEGG" id="ecoc:C3026_14840"/>
<dbReference type="PATRIC" id="fig|1411691.4.peg.4048"/>
<dbReference type="EchoBASE" id="EB1416"/>
<dbReference type="eggNOG" id="COG1551">
    <property type="taxonomic scope" value="Bacteria"/>
</dbReference>
<dbReference type="HOGENOM" id="CLU_164837_2_1_6"/>
<dbReference type="InParanoid" id="P69913"/>
<dbReference type="OMA" id="VYRKEVY"/>
<dbReference type="OrthoDB" id="9809061at2"/>
<dbReference type="PhylomeDB" id="P69913"/>
<dbReference type="BioCyc" id="EcoCyc:EG11447-MONOMER"/>
<dbReference type="EvolutionaryTrace" id="P69913"/>
<dbReference type="PHI-base" id="PHI:10254"/>
<dbReference type="PRO" id="PR:P69913"/>
<dbReference type="Proteomes" id="UP000000625">
    <property type="component" value="Chromosome"/>
</dbReference>
<dbReference type="GO" id="GO:0005829">
    <property type="term" value="C:cytosol"/>
    <property type="evidence" value="ECO:0000314"/>
    <property type="project" value="EcoCyc"/>
</dbReference>
<dbReference type="GO" id="GO:0048027">
    <property type="term" value="F:mRNA 5'-UTR binding"/>
    <property type="evidence" value="ECO:0007669"/>
    <property type="project" value="UniProtKB-UniRule"/>
</dbReference>
<dbReference type="GO" id="GO:0006402">
    <property type="term" value="P:mRNA catabolic process"/>
    <property type="evidence" value="ECO:0007669"/>
    <property type="project" value="InterPro"/>
</dbReference>
<dbReference type="GO" id="GO:0048255">
    <property type="term" value="P:mRNA stabilization"/>
    <property type="evidence" value="ECO:0000315"/>
    <property type="project" value="CACAO"/>
</dbReference>
<dbReference type="GO" id="GO:0017148">
    <property type="term" value="P:negative regulation of translation"/>
    <property type="evidence" value="ECO:0000315"/>
    <property type="project" value="CACAO"/>
</dbReference>
<dbReference type="GO" id="GO:0045947">
    <property type="term" value="P:negative regulation of translational initiation"/>
    <property type="evidence" value="ECO:0007669"/>
    <property type="project" value="UniProtKB-UniRule"/>
</dbReference>
<dbReference type="GO" id="GO:0045948">
    <property type="term" value="P:positive regulation of translational initiation"/>
    <property type="evidence" value="ECO:0000314"/>
    <property type="project" value="EcoCyc"/>
</dbReference>
<dbReference type="GO" id="GO:0006109">
    <property type="term" value="P:regulation of carbohydrate metabolic process"/>
    <property type="evidence" value="ECO:0007669"/>
    <property type="project" value="UniProtKB-UniRule"/>
</dbReference>
<dbReference type="FunFam" id="2.60.40.4380:FF:000001">
    <property type="entry name" value="Translational regulator CsrA"/>
    <property type="match status" value="1"/>
</dbReference>
<dbReference type="Gene3D" id="2.60.40.4380">
    <property type="entry name" value="Translational regulator CsrA"/>
    <property type="match status" value="1"/>
</dbReference>
<dbReference type="HAMAP" id="MF_00167">
    <property type="entry name" value="CsrA"/>
    <property type="match status" value="1"/>
</dbReference>
<dbReference type="InterPro" id="IPR003751">
    <property type="entry name" value="CsrA"/>
</dbReference>
<dbReference type="InterPro" id="IPR036107">
    <property type="entry name" value="CsrA_sf"/>
</dbReference>
<dbReference type="NCBIfam" id="TIGR00202">
    <property type="entry name" value="csrA"/>
    <property type="match status" value="1"/>
</dbReference>
<dbReference type="NCBIfam" id="NF002469">
    <property type="entry name" value="PRK01712.1"/>
    <property type="match status" value="1"/>
</dbReference>
<dbReference type="PANTHER" id="PTHR34984">
    <property type="entry name" value="CARBON STORAGE REGULATOR"/>
    <property type="match status" value="1"/>
</dbReference>
<dbReference type="PANTHER" id="PTHR34984:SF1">
    <property type="entry name" value="CARBON STORAGE REGULATOR"/>
    <property type="match status" value="1"/>
</dbReference>
<dbReference type="Pfam" id="PF02599">
    <property type="entry name" value="CsrA"/>
    <property type="match status" value="1"/>
</dbReference>
<dbReference type="SUPFAM" id="SSF117130">
    <property type="entry name" value="CsrA-like"/>
    <property type="match status" value="1"/>
</dbReference>
<proteinExistence type="evidence at protein level"/>
<reference key="1">
    <citation type="journal article" date="1993" name="J. Bacteriol.">
        <title>Identification and molecular characterization of csrA, a pleiotropic gene from Escherichia coli that affects glycogen biosynthesis, gluconeogenesis, cell size, and surface properties.</title>
        <authorList>
            <person name="Romeo T."/>
            <person name="Gong M."/>
            <person name="Liu M.-Y."/>
            <person name="Brun-Zinkernagel A.-M."/>
        </authorList>
    </citation>
    <scope>NUCLEOTIDE SEQUENCE [GENOMIC DNA]</scope>
    <scope>FUNCTION</scope>
    <scope>DISRUPTION PHENOTYPE</scope>
    <source>
        <strain>K12 / BW3414</strain>
    </source>
</reference>
<reference key="2">
    <citation type="journal article" date="1996" name="J. Mol. Biol.">
        <title>Evidence for involvement of Escherichia coli genes pmbA, csrA and a previously unrecognized gene tldD, in the control of DNA gyrase by letD (ccdB) of sex factor F.</title>
        <authorList>
            <person name="Murayama N."/>
            <person name="Shimizu H."/>
            <person name="Takiguchi S."/>
            <person name="Baba Y."/>
            <person name="Amino H."/>
            <person name="Horiuchi T."/>
            <person name="Sekimizu K."/>
            <person name="Miki T."/>
        </authorList>
    </citation>
    <scope>NUCLEOTIDE SEQUENCE [GENOMIC DNA]</scope>
    <scope>FUNCTION</scope>
    <source>
        <strain>KP4714</strain>
    </source>
</reference>
<reference key="3">
    <citation type="journal article" date="1997" name="DNA Res.">
        <title>Construction of a contiguous 874-kb sequence of the Escherichia coli-K12 genome corresponding to 50.0-68.8 min on the linkage map and analysis of its sequence features.</title>
        <authorList>
            <person name="Yamamoto Y."/>
            <person name="Aiba H."/>
            <person name="Baba T."/>
            <person name="Hayashi K."/>
            <person name="Inada T."/>
            <person name="Isono K."/>
            <person name="Itoh T."/>
            <person name="Kimura S."/>
            <person name="Kitagawa M."/>
            <person name="Makino K."/>
            <person name="Miki T."/>
            <person name="Mitsuhashi N."/>
            <person name="Mizobuchi K."/>
            <person name="Mori H."/>
            <person name="Nakade S."/>
            <person name="Nakamura Y."/>
            <person name="Nashimoto H."/>
            <person name="Oshima T."/>
            <person name="Oyama S."/>
            <person name="Saito N."/>
            <person name="Sampei G."/>
            <person name="Satoh Y."/>
            <person name="Sivasundaram S."/>
            <person name="Tagami H."/>
            <person name="Takahashi H."/>
            <person name="Takeda J."/>
            <person name="Takemoto K."/>
            <person name="Uehara K."/>
            <person name="Wada C."/>
            <person name="Yamagata S."/>
            <person name="Horiuchi T."/>
        </authorList>
    </citation>
    <scope>NUCLEOTIDE SEQUENCE [LARGE SCALE GENOMIC DNA]</scope>
    <source>
        <strain>K12 / W3110 / ATCC 27325 / DSM 5911</strain>
    </source>
</reference>
<reference key="4">
    <citation type="journal article" date="1997" name="Science">
        <title>The complete genome sequence of Escherichia coli K-12.</title>
        <authorList>
            <person name="Blattner F.R."/>
            <person name="Plunkett G. III"/>
            <person name="Bloch C.A."/>
            <person name="Perna N.T."/>
            <person name="Burland V."/>
            <person name="Riley M."/>
            <person name="Collado-Vides J."/>
            <person name="Glasner J.D."/>
            <person name="Rode C.K."/>
            <person name="Mayhew G.F."/>
            <person name="Gregor J."/>
            <person name="Davis N.W."/>
            <person name="Kirkpatrick H.A."/>
            <person name="Goeden M.A."/>
            <person name="Rose D.J."/>
            <person name="Mau B."/>
            <person name="Shao Y."/>
        </authorList>
    </citation>
    <scope>NUCLEOTIDE SEQUENCE [LARGE SCALE GENOMIC DNA]</scope>
    <source>
        <strain>K12 / MG1655 / ATCC 47076</strain>
    </source>
</reference>
<reference key="5">
    <citation type="journal article" date="2006" name="Mol. Syst. Biol.">
        <title>Highly accurate genome sequences of Escherichia coli K-12 strains MG1655 and W3110.</title>
        <authorList>
            <person name="Hayashi K."/>
            <person name="Morooka N."/>
            <person name="Yamamoto Y."/>
            <person name="Fujita K."/>
            <person name="Isono K."/>
            <person name="Choi S."/>
            <person name="Ohtsubo E."/>
            <person name="Baba T."/>
            <person name="Wanner B.L."/>
            <person name="Mori H."/>
            <person name="Horiuchi T."/>
        </authorList>
    </citation>
    <scope>NUCLEOTIDE SEQUENCE [LARGE SCALE GENOMIC DNA]</scope>
    <source>
        <strain>K12 / W3110 / ATCC 27325 / DSM 5911</strain>
    </source>
</reference>
<reference key="6">
    <citation type="journal article" date="1995" name="J. Bacteriol.">
        <title>The product of the pleiotropic Escherichia coli gene csrA modulates glycogen biosynthesis via effects on mRNA stability.</title>
        <authorList>
            <person name="Liu M.Y."/>
            <person name="Yang H."/>
            <person name="Romeo T."/>
        </authorList>
    </citation>
    <scope>FUNCTION</scope>
    <scope>DISRUPTION PHENOTYPE</scope>
    <source>
        <strain>K12 / BW3414</strain>
    </source>
</reference>
<reference key="7">
    <citation type="journal article" date="1995" name="J. Biol. Chem.">
        <title>Pleiotropic regulation of central carbohydrate metabolism in Escherichia coli via the gene csrA.</title>
        <authorList>
            <person name="Sabnis N.A."/>
            <person name="Yang H."/>
            <person name="Romeo T."/>
        </authorList>
    </citation>
    <scope>FUNCTION</scope>
    <scope>DISRUPTION PHENOTYPE</scope>
    <source>
        <strain>K12 / BW3414</strain>
    </source>
</reference>
<reference key="8">
    <citation type="journal article" date="1997" name="J. Biol. Chem.">
        <title>The RNA molecule CsrB binds to the global regulatory protein CsrA and antagonizes its activity in Escherichia coli.</title>
        <authorList>
            <person name="Liu M.Y."/>
            <person name="Gui G."/>
            <person name="Wei B."/>
            <person name="Preston J.F. III"/>
            <person name="Oakford L."/>
            <person name="Yuksel U."/>
            <person name="Giedroc D.P."/>
            <person name="Romeo T."/>
        </authorList>
    </citation>
    <scope>ANTAGONIZED BY CSRB</scope>
    <scope>SUBUNIT</scope>
    <scope>INTERACTION WITH SRNA CSRB</scope>
    <scope>RNA-BINDING</scope>
    <scope>POSSIBLE CSRA-BINDING SITE</scope>
</reference>
<reference key="9">
    <citation type="journal article" date="2001" name="Mol. Microbiol.">
        <title>Positive regulation of motility and flhDC expression by the RNA-binding protein CsrA of Escherichia coli.</title>
        <authorList>
            <person name="Wei B.L."/>
            <person name="Brun-Zinkernagel A.-M."/>
            <person name="Simecka J.W."/>
            <person name="Pruess B.M."/>
            <person name="Babitzke P."/>
            <person name="Romeo T."/>
        </authorList>
    </citation>
    <scope>FUNCTION IN MOTILITY REGULATION</scope>
</reference>
<reference key="10">
    <citation type="journal article" date="2002" name="J. Bacteriol.">
        <title>Biofilm formation and dispersal under the influence of the global regulator CsrA of Escherichia coli.</title>
        <authorList>
            <person name="Jackson D.W."/>
            <person name="Suzuki K."/>
            <person name="Oakford L."/>
            <person name="Simecka J.W."/>
            <person name="Hart M.E."/>
            <person name="Romeo T."/>
        </authorList>
    </citation>
    <scope>FUNCTION IN BIOFILM REPRESSION</scope>
    <scope>DISRUPTION PHENOTYPE</scope>
    <source>
        <strain>K12 / MG1655 / ATCC 47076</strain>
    </source>
</reference>
<reference key="11">
    <citation type="journal article" date="2002" name="J. Bacteriol.">
        <title>Regulatory circuitry of the CsrA/CsrB and BarA/UvrY systems of Escherichia coli.</title>
        <authorList>
            <person name="Suzuki K."/>
            <person name="Wang X."/>
            <person name="Weilbacher T."/>
            <person name="Pernestig A.-K."/>
            <person name="Melefors O."/>
            <person name="Georgellis D."/>
            <person name="Babitzke P."/>
            <person name="Romeo T."/>
        </authorList>
    </citation>
    <scope>FUNCTION</scope>
    <source>
        <strain>K12 / MC4100 / ATCC 35695 / DSM 6574</strain>
    </source>
</reference>
<reference key="12">
    <citation type="journal article" date="2002" name="Mol. Microbiol.">
        <title>CsrA regulates glycogen biosynthesis by preventing translation of glgC in Escherichia coli.</title>
        <authorList>
            <person name="Baker C.S."/>
            <person name="Morozov I."/>
            <person name="Suzuki K."/>
            <person name="Romeo T."/>
            <person name="Babitzke P."/>
        </authorList>
    </citation>
    <scope>FUNCTION</scope>
    <scope>RNA-BINDING</scope>
</reference>
<reference key="13">
    <citation type="journal article" date="2003" name="Mol. Microbiol.">
        <title>A novel sRNA component of the carbon storage regulatory system of Escherichia coli.</title>
        <authorList>
            <person name="Weilbacher T."/>
            <person name="Suzuki K."/>
            <person name="Dubey A.K."/>
            <person name="Wang X."/>
            <person name="Gudapaty S."/>
            <person name="Morozov I."/>
            <person name="Baker C.S."/>
            <person name="Georgellis D."/>
            <person name="Babitzke P."/>
            <person name="Romeo T."/>
        </authorList>
    </citation>
    <scope>ANTAGONIZED BY CSRB AND CSRC</scope>
    <scope>SUBUNIT</scope>
    <scope>INTERACTION WITH SRNA CSRC</scope>
    <scope>DISRUPTION PHENOTYPE</scope>
    <scope>RNA-BINDING</scope>
</reference>
<reference key="14">
    <citation type="journal article" date="2006" name="J. Bacteriol.">
        <title>Autoinducer 2 controls biofilm formation in Escherichia coli through a novel motility quorum-sensing regulator (MqsR, B3022).</title>
        <authorList>
            <person name="Gonzalez Barrios A.F."/>
            <person name="Zuo R."/>
            <person name="Hashimoto Y."/>
            <person name="Yang L."/>
            <person name="Bentley W.E."/>
            <person name="Wood T.K."/>
        </authorList>
    </citation>
    <scope>INDUCTION</scope>
    <source>
        <strain>K12 / ATCC 25404 / DSM 5698 / NCIMB 11290</strain>
        <strain>K12 / DH5-alpha</strain>
        <strain>K12 / W3110 / ATCC 27325 / DSM 5911</strain>
    </source>
</reference>
<reference key="15">
    <citation type="journal article" date="2006" name="J. Biol. Chem.">
        <title>Comprehensive alanine-scanning mutagenesis of Escherichia coli CsrA defines two subdomains of critical functional importance.</title>
        <authorList>
            <person name="Mercante J."/>
            <person name="Suzuki K."/>
            <person name="Cheng X."/>
            <person name="Babitzke P."/>
            <person name="Romeo T."/>
        </authorList>
    </citation>
    <scope>FUNCTION</scope>
    <scope>DOMAIN</scope>
    <scope>MUTAGENESIS OF LEU-2; ILE-3; LEU-4; ARG-6; ARG-7; THR-19; ASN-35; VAL-40; VAL-42; ARG-44 AND ILE-47</scope>
    <scope>RNA-BINDING</scope>
    <source>
        <strain>K12 / MG1655 / ATCC 47076</strain>
    </source>
</reference>
<reference key="16">
    <citation type="journal article" date="2008" name="J. Bacteriol.">
        <title>Genetic interaction screens with ordered overexpression and deletion clone sets implicate the Escherichia coli GTPase YjeQ in late ribosome biogenesis.</title>
        <authorList>
            <person name="Campbell T.L."/>
            <person name="Brown E.D."/>
        </authorList>
    </citation>
    <scope>PARTIALLY SUPPRESSES AN RSGA MUTANT</scope>
    <source>
        <strain>K12</strain>
    </source>
</reference>
<reference key="17">
    <citation type="journal article" date="2008" name="Mol. Microbiol.">
        <title>The RNA binding protein CsrA controls cyclic di-GMP metabolism by directly regulating the expression of GGDEF proteins.</title>
        <authorList>
            <person name="Jonas K."/>
            <person name="Edwards A.N."/>
            <person name="Simm R."/>
            <person name="Romeo T."/>
            <person name="Romling U."/>
            <person name="Melefors O."/>
        </authorList>
    </citation>
    <scope>RNA-BINDING</scope>
    <scope>FUNCTION IN DIGUANYLATE CYCLASE REGULATION</scope>
    <scope>INDUCTION</scope>
    <source>
        <strain>K12</strain>
    </source>
</reference>
<reference key="18">
    <citation type="journal article" date="2009" name="J. Bacteriol.">
        <title>Conditional essentiality of the csrA gene in Escherichia coli.</title>
        <authorList>
            <person name="Timmermans J."/>
            <person name="Van Melderen L."/>
        </authorList>
    </citation>
    <scope>DISRUPTION PHENOTYPE</scope>
    <source>
        <strain>K12 / MG1655 / ATCC 47076</strain>
    </source>
</reference>
<reference key="19">
    <citation type="journal article" date="2009" name="Mol. Microbiol.">
        <title>Second messenger signalling governs Escherichia coli biofilm induction upon ribosomal stress.</title>
        <authorList>
            <person name="Boehm A."/>
            <person name="Steiner S."/>
            <person name="Zaehringer F."/>
            <person name="Casanova A."/>
            <person name="Hamburger F."/>
            <person name="Ritz D."/>
            <person name="Keck W."/>
            <person name="Ackermann M."/>
            <person name="Schirmer T."/>
            <person name="Jenal U."/>
        </authorList>
    </citation>
    <scope>FUNCTION IN BIOFILM FORMATION</scope>
    <scope>DISRUPTION PHENOTYPE</scope>
    <source>
        <strain>K12 / AB400</strain>
    </source>
</reference>
<reference key="20">
    <citation type="journal article" date="2011" name="Mol. Microbiol.">
        <title>Circuitry linking the Csr and stringent response global regulatory systems.</title>
        <authorList>
            <person name="Edwards A.N."/>
            <person name="Patterson-Fortin L.M."/>
            <person name="Vakulskas C.A."/>
            <person name="Mercante J.W."/>
            <person name="Potrykus K."/>
            <person name="Vinella D."/>
            <person name="Camacho M.I."/>
            <person name="Fields J.A."/>
            <person name="Thompson S.A."/>
            <person name="Georgellis D."/>
            <person name="Cashel M."/>
            <person name="Babitzke P."/>
            <person name="Romeo T."/>
        </authorList>
    </citation>
    <scope>FUNCTION</scope>
    <scope>REGULON</scope>
    <scope>DISRUPTION PHENOTYPE</scope>
    <scope>RNA-BINDING</scope>
    <source>
        <strain>K12 / CF7789</strain>
        <strain>K12 / MG1655 / ATCC 47076</strain>
    </source>
</reference>
<reference key="21">
    <citation type="journal article" date="2011" name="Mol. Microbiol.">
        <title>Complex regulation of the global regulatory gene csrA: CsrA-mediated translational repression, transcription from five promoters by Esigma(70) and Esigma(S), and indirect transcriptional activation by CsrA.</title>
        <authorList>
            <person name="Yakhnin H."/>
            <person name="Yakhnin A.V."/>
            <person name="Baker C.S."/>
            <person name="Sineva E."/>
            <person name="Berezin I."/>
            <person name="Romeo T."/>
            <person name="Babitzke P."/>
        </authorList>
    </citation>
    <scope>FUNCTION</scope>
    <scope>INDUCTION</scope>
    <source>
        <strain>K12 / CF7789</strain>
    </source>
</reference>
<reference key="22">
    <citation type="journal article" date="2017" name="MBio">
        <title>Translational repression of the RpoS antiadapter IraD by CsrA is mediated via translational coupling to a short upstream open reading frame.</title>
        <authorList>
            <person name="Park H."/>
            <person name="McGibbon L.C."/>
            <person name="Potts A.H."/>
            <person name="Yakhnin H."/>
            <person name="Romeo T."/>
            <person name="Babitzke P."/>
        </authorList>
    </citation>
    <scope>FUNCTION</scope>
    <scope>RNA-BINDING</scope>
    <source>
        <strain>K12 / CF7789</strain>
    </source>
</reference>
<reference key="23">
    <citation type="journal article" date="2017" name="J. Bacteriol.">
        <title>Circuitry linking the global Csr and sigma(E)-dependent cell envelope stress response systems.</title>
        <authorList>
            <person name="Yakhnin H."/>
            <person name="Aichele R."/>
            <person name="Ades S.E."/>
            <person name="Romeo T."/>
            <person name="Babitzke P."/>
        </authorList>
    </citation>
    <scope>FUNCTION</scope>
    <scope>DISRUPTION PHENOTYPE</scope>
    <scope>RNA-BINDING</scope>
    <source>
        <strain>K12 / CF7789</strain>
    </source>
</reference>
<reference key="24">
    <citation type="journal article" date="2015" name="Microbiol. Mol. Biol. Rev.">
        <title>Regulation of bacterial virulence by Csr (Rsm) systems.</title>
        <authorList>
            <person name="Vakulskas C.A."/>
            <person name="Potts A.H."/>
            <person name="Babitzke P."/>
            <person name="Ahmer B.M."/>
            <person name="Romeo T."/>
        </authorList>
    </citation>
    <scope>REVIEW</scope>
</reference>
<reference key="25">
    <citation type="journal article" date="2005" name="J. Bacteriol.">
        <title>Solution structure of the carbon storage regulator protein CsrA from Escherichia coli.</title>
        <authorList>
            <person name="Gutierrez P."/>
            <person name="Li Y."/>
            <person name="Osborne M.J."/>
            <person name="Pomerantseva E."/>
            <person name="Liu Q."/>
            <person name="Gehring K."/>
        </authorList>
    </citation>
    <scope>STRUCTURE BY NMR</scope>
    <scope>RNA-BINDING</scope>
    <scope>SUBUNIT</scope>
</reference>